<name>ATPG_HISS2</name>
<keyword id="KW-0066">ATP synthesis</keyword>
<keyword id="KW-0997">Cell inner membrane</keyword>
<keyword id="KW-1003">Cell membrane</keyword>
<keyword id="KW-0139">CF(1)</keyword>
<keyword id="KW-0375">Hydrogen ion transport</keyword>
<keyword id="KW-0406">Ion transport</keyword>
<keyword id="KW-0472">Membrane</keyword>
<keyword id="KW-0813">Transport</keyword>
<comment type="function">
    <text evidence="1">Produces ATP from ADP in the presence of a proton gradient across the membrane. The gamma chain is believed to be important in regulating ATPase activity and the flow of protons through the CF(0) complex.</text>
</comment>
<comment type="subunit">
    <text evidence="1">F-type ATPases have 2 components, CF(1) - the catalytic core - and CF(0) - the membrane proton channel. CF(1) has five subunits: alpha(3), beta(3), gamma(1), delta(1), epsilon(1). CF(0) has three main subunits: a, b and c.</text>
</comment>
<comment type="subcellular location">
    <subcellularLocation>
        <location evidence="1">Cell inner membrane</location>
        <topology evidence="1">Peripheral membrane protein</topology>
    </subcellularLocation>
</comment>
<comment type="similarity">
    <text evidence="1">Belongs to the ATPase gamma chain family.</text>
</comment>
<accession>B0UWG6</accession>
<dbReference type="EMBL" id="CP000947">
    <property type="protein sequence ID" value="ACA31640.1"/>
    <property type="molecule type" value="Genomic_DNA"/>
</dbReference>
<dbReference type="RefSeq" id="WP_012340943.1">
    <property type="nucleotide sequence ID" value="NC_010519.1"/>
</dbReference>
<dbReference type="SMR" id="B0UWG6"/>
<dbReference type="STRING" id="228400.HSM_1851"/>
<dbReference type="GeneID" id="31488158"/>
<dbReference type="KEGG" id="hsm:HSM_1851"/>
<dbReference type="HOGENOM" id="CLU_050669_0_1_6"/>
<dbReference type="GO" id="GO:0005886">
    <property type="term" value="C:plasma membrane"/>
    <property type="evidence" value="ECO:0007669"/>
    <property type="project" value="UniProtKB-SubCell"/>
</dbReference>
<dbReference type="GO" id="GO:0045259">
    <property type="term" value="C:proton-transporting ATP synthase complex"/>
    <property type="evidence" value="ECO:0007669"/>
    <property type="project" value="UniProtKB-KW"/>
</dbReference>
<dbReference type="GO" id="GO:0005524">
    <property type="term" value="F:ATP binding"/>
    <property type="evidence" value="ECO:0007669"/>
    <property type="project" value="UniProtKB-UniRule"/>
</dbReference>
<dbReference type="GO" id="GO:0046933">
    <property type="term" value="F:proton-transporting ATP synthase activity, rotational mechanism"/>
    <property type="evidence" value="ECO:0007669"/>
    <property type="project" value="UniProtKB-UniRule"/>
</dbReference>
<dbReference type="GO" id="GO:0042777">
    <property type="term" value="P:proton motive force-driven plasma membrane ATP synthesis"/>
    <property type="evidence" value="ECO:0007669"/>
    <property type="project" value="UniProtKB-UniRule"/>
</dbReference>
<dbReference type="CDD" id="cd12151">
    <property type="entry name" value="F1-ATPase_gamma"/>
    <property type="match status" value="1"/>
</dbReference>
<dbReference type="FunFam" id="1.10.287.80:FF:000005">
    <property type="entry name" value="ATP synthase gamma chain"/>
    <property type="match status" value="1"/>
</dbReference>
<dbReference type="FunFam" id="3.40.1380.10:FF:000006">
    <property type="entry name" value="ATP synthase gamma chain"/>
    <property type="match status" value="1"/>
</dbReference>
<dbReference type="Gene3D" id="3.40.1380.10">
    <property type="match status" value="1"/>
</dbReference>
<dbReference type="Gene3D" id="1.10.287.80">
    <property type="entry name" value="ATP synthase, gamma subunit, helix hairpin domain"/>
    <property type="match status" value="1"/>
</dbReference>
<dbReference type="HAMAP" id="MF_00815">
    <property type="entry name" value="ATP_synth_gamma_bact"/>
    <property type="match status" value="1"/>
</dbReference>
<dbReference type="InterPro" id="IPR035968">
    <property type="entry name" value="ATP_synth_F1_ATPase_gsu"/>
</dbReference>
<dbReference type="InterPro" id="IPR000131">
    <property type="entry name" value="ATP_synth_F1_gsu"/>
</dbReference>
<dbReference type="InterPro" id="IPR023632">
    <property type="entry name" value="ATP_synth_F1_gsu_CS"/>
</dbReference>
<dbReference type="NCBIfam" id="TIGR01146">
    <property type="entry name" value="ATPsyn_F1gamma"/>
    <property type="match status" value="1"/>
</dbReference>
<dbReference type="NCBIfam" id="NF004144">
    <property type="entry name" value="PRK05621.1-1"/>
    <property type="match status" value="1"/>
</dbReference>
<dbReference type="PANTHER" id="PTHR11693">
    <property type="entry name" value="ATP SYNTHASE GAMMA CHAIN"/>
    <property type="match status" value="1"/>
</dbReference>
<dbReference type="PANTHER" id="PTHR11693:SF22">
    <property type="entry name" value="ATP SYNTHASE SUBUNIT GAMMA, MITOCHONDRIAL"/>
    <property type="match status" value="1"/>
</dbReference>
<dbReference type="Pfam" id="PF00231">
    <property type="entry name" value="ATP-synt"/>
    <property type="match status" value="1"/>
</dbReference>
<dbReference type="PRINTS" id="PR00126">
    <property type="entry name" value="ATPASEGAMMA"/>
</dbReference>
<dbReference type="SUPFAM" id="SSF52943">
    <property type="entry name" value="ATP synthase (F1-ATPase), gamma subunit"/>
    <property type="match status" value="1"/>
</dbReference>
<dbReference type="PROSITE" id="PS00153">
    <property type="entry name" value="ATPASE_GAMMA"/>
    <property type="match status" value="1"/>
</dbReference>
<reference key="1">
    <citation type="submission" date="2008-02" db="EMBL/GenBank/DDBJ databases">
        <title>Complete sequence of Haemophilus somnus 2336.</title>
        <authorList>
            <consortium name="US DOE Joint Genome Institute"/>
            <person name="Siddaramappa S."/>
            <person name="Duncan A.J."/>
            <person name="Challacombe J.F."/>
            <person name="Rainey D."/>
            <person name="Gillaspy A.F."/>
            <person name="Carson M."/>
            <person name="Gipson J."/>
            <person name="Gipson M."/>
            <person name="Bruce D."/>
            <person name="Detter J.C."/>
            <person name="Han C.S."/>
            <person name="Land M."/>
            <person name="Tapia R."/>
            <person name="Thompson L.S."/>
            <person name="Orvis J."/>
            <person name="Zaitshik J."/>
            <person name="Barnes G."/>
            <person name="Brettin T.S."/>
            <person name="Dyer D.W."/>
            <person name="Inzana T.J."/>
        </authorList>
    </citation>
    <scope>NUCLEOTIDE SEQUENCE [LARGE SCALE GENOMIC DNA]</scope>
    <source>
        <strain>2336</strain>
    </source>
</reference>
<gene>
    <name evidence="1" type="primary">atpG</name>
    <name type="ordered locus">HSM_1851</name>
</gene>
<protein>
    <recommendedName>
        <fullName evidence="1">ATP synthase gamma chain</fullName>
    </recommendedName>
    <alternativeName>
        <fullName evidence="1">ATP synthase F1 sector gamma subunit</fullName>
    </alternativeName>
    <alternativeName>
        <fullName evidence="1">F-ATPase gamma subunit</fullName>
    </alternativeName>
</protein>
<proteinExistence type="inferred from homology"/>
<feature type="chain" id="PRO_1000083791" description="ATP synthase gamma chain">
    <location>
        <begin position="1"/>
        <end position="289"/>
    </location>
</feature>
<evidence type="ECO:0000255" key="1">
    <source>
        <dbReference type="HAMAP-Rule" id="MF_00815"/>
    </source>
</evidence>
<organism>
    <name type="scientific">Histophilus somni (strain 2336)</name>
    <name type="common">Haemophilus somnus</name>
    <dbReference type="NCBI Taxonomy" id="228400"/>
    <lineage>
        <taxon>Bacteria</taxon>
        <taxon>Pseudomonadati</taxon>
        <taxon>Pseudomonadota</taxon>
        <taxon>Gammaproteobacteria</taxon>
        <taxon>Pasteurellales</taxon>
        <taxon>Pasteurellaceae</taxon>
        <taxon>Histophilus</taxon>
    </lineage>
</organism>
<sequence length="289" mass="31890">MAGAKEIRTKISSVQSTQKITKAMEMVAASKMRKTQDRMSSSRPYSKAIQGVISHISKANIDYQHPFLIEREVKNVGILIISTDRGLCGGLNVNLFKTALSEIKNWKEQNVDVSLGLIGAKGIGFFQSLGLKIKAQHSGMGDTPVAEELIGIANRMFEAYKEGKIDAIYVTYNKFINTMSQKPIMEKLVPLPELDNDSLGKNSDNWEYIYEPNPQTLLDSLLVRYLESQVYQAVVENLASEQAARMVAMKAATDNAGNLINDLQLVYNKARQASITNELNEIVAGAAAI</sequence>